<protein>
    <recommendedName>
        <fullName>HAUS augmin-like complex subunit 3</fullName>
    </recommendedName>
</protein>
<feature type="initiator methionine" description="Removed" evidence="2">
    <location>
        <position position="1"/>
    </location>
</feature>
<feature type="chain" id="PRO_0000301952" description="HAUS augmin-like complex subunit 3">
    <location>
        <begin position="2"/>
        <end position="570"/>
    </location>
</feature>
<feature type="coiled-coil region" evidence="3">
    <location>
        <begin position="90"/>
        <end position="124"/>
    </location>
</feature>
<feature type="coiled-coil region" evidence="3">
    <location>
        <begin position="154"/>
        <end position="178"/>
    </location>
</feature>
<feature type="coiled-coil region" evidence="3">
    <location>
        <begin position="284"/>
        <end position="336"/>
    </location>
</feature>
<feature type="coiled-coil region" evidence="3">
    <location>
        <begin position="458"/>
        <end position="495"/>
    </location>
</feature>
<feature type="modified residue" description="N-acetylserine" evidence="2">
    <location>
        <position position="2"/>
    </location>
</feature>
<feature type="splice variant" id="VSP_027887" description="In isoform 2." evidence="4">
    <original>ELKEHFHQVESQLNELHHLLTDILADVKTKRRILATNKLHQVER</original>
    <variation>VSVYLKI</variation>
    <location>
        <begin position="527"/>
        <end position="570"/>
    </location>
</feature>
<feature type="sequence conflict" description="In Ref. 2; AAH23882." evidence="5" ref="2">
    <original>F</original>
    <variation>L</variation>
    <location>
        <position position="31"/>
    </location>
</feature>
<sequence length="570" mass="66308">MSCGNEFVETLKKIGYPKADILNGEDFDWLFEDVEDESFLKWFCGNVNEQNVLSEKELEAFSDLQRSGKPILEGTALDEVLRTCKTFDLKTCKLDDKEIQILEDEVQTLQKLNNSKIQRRNKYQLMVSETSYRFLALNAKQEEATKKLKQKQGFLNSVNTKLSNELQGLTEEVNNLMIFFRNSNLSERTNPMVFLSQFPLGKYISQEEQSTAALTLYTKKQFFQGMHEVVESSNEDNFQLLDIQTPSICDNEEILRERRLEMARLQMACICVQKQIIYLKTSNLSMKSSIKWAEENLNRLTNEVIDKENLDAEISSLNSEILKLEEQITHIKDKVLPAVVKEYAQLLNMPVVKGDFELQIAKQDYYTARQELVLNELIKQKASFELVQLSYEIELRKHWDTYRQLESLVQQLSQRNTVLCQHLAVLSDIPASEQLTSRTPIDTKDHSTHRLYELLEGDNKKKELFITHEHLEEVAEKLKQDVSVIQDQLAVSTQEHFFFLSKLNNDVDMLCDALYRGGNQLLLCDQELKEHFHQVESQLNELHHLLTDILADVKTKRRILATNKLHQVER</sequence>
<reference key="1">
    <citation type="journal article" date="2005" name="Science">
        <title>The transcriptional landscape of the mammalian genome.</title>
        <authorList>
            <person name="Carninci P."/>
            <person name="Kasukawa T."/>
            <person name="Katayama S."/>
            <person name="Gough J."/>
            <person name="Frith M.C."/>
            <person name="Maeda N."/>
            <person name="Oyama R."/>
            <person name="Ravasi T."/>
            <person name="Lenhard B."/>
            <person name="Wells C."/>
            <person name="Kodzius R."/>
            <person name="Shimokawa K."/>
            <person name="Bajic V.B."/>
            <person name="Brenner S.E."/>
            <person name="Batalov S."/>
            <person name="Forrest A.R."/>
            <person name="Zavolan M."/>
            <person name="Davis M.J."/>
            <person name="Wilming L.G."/>
            <person name="Aidinis V."/>
            <person name="Allen J.E."/>
            <person name="Ambesi-Impiombato A."/>
            <person name="Apweiler R."/>
            <person name="Aturaliya R.N."/>
            <person name="Bailey T.L."/>
            <person name="Bansal M."/>
            <person name="Baxter L."/>
            <person name="Beisel K.W."/>
            <person name="Bersano T."/>
            <person name="Bono H."/>
            <person name="Chalk A.M."/>
            <person name="Chiu K.P."/>
            <person name="Choudhary V."/>
            <person name="Christoffels A."/>
            <person name="Clutterbuck D.R."/>
            <person name="Crowe M.L."/>
            <person name="Dalla E."/>
            <person name="Dalrymple B.P."/>
            <person name="de Bono B."/>
            <person name="Della Gatta G."/>
            <person name="di Bernardo D."/>
            <person name="Down T."/>
            <person name="Engstrom P."/>
            <person name="Fagiolini M."/>
            <person name="Faulkner G."/>
            <person name="Fletcher C.F."/>
            <person name="Fukushima T."/>
            <person name="Furuno M."/>
            <person name="Futaki S."/>
            <person name="Gariboldi M."/>
            <person name="Georgii-Hemming P."/>
            <person name="Gingeras T.R."/>
            <person name="Gojobori T."/>
            <person name="Green R.E."/>
            <person name="Gustincich S."/>
            <person name="Harbers M."/>
            <person name="Hayashi Y."/>
            <person name="Hensch T.K."/>
            <person name="Hirokawa N."/>
            <person name="Hill D."/>
            <person name="Huminiecki L."/>
            <person name="Iacono M."/>
            <person name="Ikeo K."/>
            <person name="Iwama A."/>
            <person name="Ishikawa T."/>
            <person name="Jakt M."/>
            <person name="Kanapin A."/>
            <person name="Katoh M."/>
            <person name="Kawasawa Y."/>
            <person name="Kelso J."/>
            <person name="Kitamura H."/>
            <person name="Kitano H."/>
            <person name="Kollias G."/>
            <person name="Krishnan S.P."/>
            <person name="Kruger A."/>
            <person name="Kummerfeld S.K."/>
            <person name="Kurochkin I.V."/>
            <person name="Lareau L.F."/>
            <person name="Lazarevic D."/>
            <person name="Lipovich L."/>
            <person name="Liu J."/>
            <person name="Liuni S."/>
            <person name="McWilliam S."/>
            <person name="Madan Babu M."/>
            <person name="Madera M."/>
            <person name="Marchionni L."/>
            <person name="Matsuda H."/>
            <person name="Matsuzawa S."/>
            <person name="Miki H."/>
            <person name="Mignone F."/>
            <person name="Miyake S."/>
            <person name="Morris K."/>
            <person name="Mottagui-Tabar S."/>
            <person name="Mulder N."/>
            <person name="Nakano N."/>
            <person name="Nakauchi H."/>
            <person name="Ng P."/>
            <person name="Nilsson R."/>
            <person name="Nishiguchi S."/>
            <person name="Nishikawa S."/>
            <person name="Nori F."/>
            <person name="Ohara O."/>
            <person name="Okazaki Y."/>
            <person name="Orlando V."/>
            <person name="Pang K.C."/>
            <person name="Pavan W.J."/>
            <person name="Pavesi G."/>
            <person name="Pesole G."/>
            <person name="Petrovsky N."/>
            <person name="Piazza S."/>
            <person name="Reed J."/>
            <person name="Reid J.F."/>
            <person name="Ring B.Z."/>
            <person name="Ringwald M."/>
            <person name="Rost B."/>
            <person name="Ruan Y."/>
            <person name="Salzberg S.L."/>
            <person name="Sandelin A."/>
            <person name="Schneider C."/>
            <person name="Schoenbach C."/>
            <person name="Sekiguchi K."/>
            <person name="Semple C.A."/>
            <person name="Seno S."/>
            <person name="Sessa L."/>
            <person name="Sheng Y."/>
            <person name="Shibata Y."/>
            <person name="Shimada H."/>
            <person name="Shimada K."/>
            <person name="Silva D."/>
            <person name="Sinclair B."/>
            <person name="Sperling S."/>
            <person name="Stupka E."/>
            <person name="Sugiura K."/>
            <person name="Sultana R."/>
            <person name="Takenaka Y."/>
            <person name="Taki K."/>
            <person name="Tammoja K."/>
            <person name="Tan S.L."/>
            <person name="Tang S."/>
            <person name="Taylor M.S."/>
            <person name="Tegner J."/>
            <person name="Teichmann S.A."/>
            <person name="Ueda H.R."/>
            <person name="van Nimwegen E."/>
            <person name="Verardo R."/>
            <person name="Wei C.L."/>
            <person name="Yagi K."/>
            <person name="Yamanishi H."/>
            <person name="Zabarovsky E."/>
            <person name="Zhu S."/>
            <person name="Zimmer A."/>
            <person name="Hide W."/>
            <person name="Bult C."/>
            <person name="Grimmond S.M."/>
            <person name="Teasdale R.D."/>
            <person name="Liu E.T."/>
            <person name="Brusic V."/>
            <person name="Quackenbush J."/>
            <person name="Wahlestedt C."/>
            <person name="Mattick J.S."/>
            <person name="Hume D.A."/>
            <person name="Kai C."/>
            <person name="Sasaki D."/>
            <person name="Tomaru Y."/>
            <person name="Fukuda S."/>
            <person name="Kanamori-Katayama M."/>
            <person name="Suzuki M."/>
            <person name="Aoki J."/>
            <person name="Arakawa T."/>
            <person name="Iida J."/>
            <person name="Imamura K."/>
            <person name="Itoh M."/>
            <person name="Kato T."/>
            <person name="Kawaji H."/>
            <person name="Kawagashira N."/>
            <person name="Kawashima T."/>
            <person name="Kojima M."/>
            <person name="Kondo S."/>
            <person name="Konno H."/>
            <person name="Nakano K."/>
            <person name="Ninomiya N."/>
            <person name="Nishio T."/>
            <person name="Okada M."/>
            <person name="Plessy C."/>
            <person name="Shibata K."/>
            <person name="Shiraki T."/>
            <person name="Suzuki S."/>
            <person name="Tagami M."/>
            <person name="Waki K."/>
            <person name="Watahiki A."/>
            <person name="Okamura-Oho Y."/>
            <person name="Suzuki H."/>
            <person name="Kawai J."/>
            <person name="Hayashizaki Y."/>
        </authorList>
    </citation>
    <scope>NUCLEOTIDE SEQUENCE [LARGE SCALE MRNA] (ISOFORM 2)</scope>
    <scope>NUCLEOTIDE SEQUENCE [LARGE SCALE MRNA] OF 271-554 (ISOFORM 1)</scope>
    <source>
        <strain>C57BL/6J</strain>
        <tissue>Embryo</tissue>
        <tissue>Thymus</tissue>
    </source>
</reference>
<reference key="2">
    <citation type="journal article" date="2004" name="Genome Res.">
        <title>The status, quality, and expansion of the NIH full-length cDNA project: the Mammalian Gene Collection (MGC).</title>
        <authorList>
            <consortium name="The MGC Project Team"/>
        </authorList>
    </citation>
    <scope>NUCLEOTIDE SEQUENCE [LARGE SCALE MRNA] (ISOFORM 1)</scope>
    <source>
        <strain>FVB/N</strain>
        <tissue>Mammary tumor</tissue>
    </source>
</reference>
<reference key="3">
    <citation type="journal article" date="2010" name="Cell">
        <title>A tissue-specific atlas of mouse protein phosphorylation and expression.</title>
        <authorList>
            <person name="Huttlin E.L."/>
            <person name="Jedrychowski M.P."/>
            <person name="Elias J.E."/>
            <person name="Goswami T."/>
            <person name="Rad R."/>
            <person name="Beausoleil S.A."/>
            <person name="Villen J."/>
            <person name="Haas W."/>
            <person name="Sowa M.E."/>
            <person name="Gygi S.P."/>
        </authorList>
    </citation>
    <scope>IDENTIFICATION BY MASS SPECTROMETRY [LARGE SCALE ANALYSIS]</scope>
    <source>
        <tissue>Spleen</tissue>
    </source>
</reference>
<keyword id="KW-0007">Acetylation</keyword>
<keyword id="KW-0025">Alternative splicing</keyword>
<keyword id="KW-0131">Cell cycle</keyword>
<keyword id="KW-0132">Cell division</keyword>
<keyword id="KW-0175">Coiled coil</keyword>
<keyword id="KW-0963">Cytoplasm</keyword>
<keyword id="KW-0206">Cytoskeleton</keyword>
<keyword id="KW-0493">Microtubule</keyword>
<keyword id="KW-0498">Mitosis</keyword>
<keyword id="KW-1185">Reference proteome</keyword>
<accession>Q8QZX2</accession>
<accession>Q3TSW5</accession>
<accession>Q8BQL2</accession>
<accession>Q8CIH1</accession>
<name>HAUS3_MOUSE</name>
<organism>
    <name type="scientific">Mus musculus</name>
    <name type="common">Mouse</name>
    <dbReference type="NCBI Taxonomy" id="10090"/>
    <lineage>
        <taxon>Eukaryota</taxon>
        <taxon>Metazoa</taxon>
        <taxon>Chordata</taxon>
        <taxon>Craniata</taxon>
        <taxon>Vertebrata</taxon>
        <taxon>Euteleostomi</taxon>
        <taxon>Mammalia</taxon>
        <taxon>Eutheria</taxon>
        <taxon>Euarchontoglires</taxon>
        <taxon>Glires</taxon>
        <taxon>Rodentia</taxon>
        <taxon>Myomorpha</taxon>
        <taxon>Muroidea</taxon>
        <taxon>Muridae</taxon>
        <taxon>Murinae</taxon>
        <taxon>Mus</taxon>
        <taxon>Mus</taxon>
    </lineage>
</organism>
<comment type="function">
    <text evidence="1">Contributes to mitotic spindle assembly, maintenance of centrosome integrity and completion of cytokinesis as part of the HAUS augmin-like complex.</text>
</comment>
<comment type="subunit">
    <text evidence="2">Component of the HAUS augmin-like complex. The complex interacts with the gamma-tubulin ring complex and this interaction is required for spindle assembly (By similarity). Interacts with EML3 (phosphorylated at 'Thr-882') (By similarity).</text>
</comment>
<comment type="subcellular location">
    <subcellularLocation>
        <location evidence="2">Cytoplasm</location>
        <location evidence="2">Cytoskeleton</location>
        <location evidence="2">Microtubule organizing center</location>
        <location evidence="2">Centrosome</location>
    </subcellularLocation>
    <subcellularLocation>
        <location evidence="2">Cytoplasm</location>
        <location evidence="2">Cytoskeleton</location>
        <location evidence="2">Spindle</location>
    </subcellularLocation>
    <text evidence="2">Localizes to interphase centrosomes and to mitotic spindle microtubules.</text>
</comment>
<comment type="alternative products">
    <event type="alternative splicing"/>
    <isoform>
        <id>Q8QZX2-1</id>
        <name>1</name>
        <sequence type="displayed"/>
    </isoform>
    <isoform>
        <id>Q8QZX2-2</id>
        <name>2</name>
        <sequence type="described" ref="VSP_027887"/>
    </isoform>
</comment>
<comment type="similarity">
    <text evidence="5">Belongs to the HAUS3 family.</text>
</comment>
<comment type="sequence caution" evidence="5">
    <conflict type="erroneous initiation">
        <sequence resource="EMBL-CDS" id="BAE36560"/>
    </conflict>
    <text>Truncated N-terminus.</text>
</comment>
<proteinExistence type="evidence at protein level"/>
<dbReference type="EMBL" id="AK049414">
    <property type="protein sequence ID" value="BAC33742.1"/>
    <property type="molecule type" value="mRNA"/>
</dbReference>
<dbReference type="EMBL" id="AK161756">
    <property type="protein sequence ID" value="BAE36560.1"/>
    <property type="status" value="ALT_INIT"/>
    <property type="molecule type" value="mRNA"/>
</dbReference>
<dbReference type="EMBL" id="BC023882">
    <property type="protein sequence ID" value="AAH23882.1"/>
    <property type="molecule type" value="mRNA"/>
</dbReference>
<dbReference type="EMBL" id="BC025497">
    <property type="protein sequence ID" value="AAH25497.1"/>
    <property type="molecule type" value="mRNA"/>
</dbReference>
<dbReference type="EMBL" id="BC027393">
    <property type="protein sequence ID" value="AAH27393.1"/>
    <property type="molecule type" value="mRNA"/>
</dbReference>
<dbReference type="CCDS" id="CCDS19211.1">
    <molecule id="Q8QZX2-1"/>
</dbReference>
<dbReference type="RefSeq" id="NP_666271.1">
    <molecule id="Q8QZX2-1"/>
    <property type="nucleotide sequence ID" value="NM_146159.2"/>
</dbReference>
<dbReference type="SMR" id="Q8QZX2"/>
<dbReference type="BioGRID" id="231085">
    <property type="interactions" value="5"/>
</dbReference>
<dbReference type="FunCoup" id="Q8QZX2">
    <property type="interactions" value="1740"/>
</dbReference>
<dbReference type="IntAct" id="Q8QZX2">
    <property type="interactions" value="4"/>
</dbReference>
<dbReference type="STRING" id="10090.ENSMUSP00000049973"/>
<dbReference type="PhosphoSitePlus" id="Q8QZX2"/>
<dbReference type="PaxDb" id="10090-ENSMUSP00000049973"/>
<dbReference type="PeptideAtlas" id="Q8QZX2"/>
<dbReference type="ProteomicsDB" id="270940">
    <molecule id="Q8QZX2-1"/>
</dbReference>
<dbReference type="ProteomicsDB" id="270941">
    <molecule id="Q8QZX2-2"/>
</dbReference>
<dbReference type="Pumba" id="Q8QZX2"/>
<dbReference type="Antibodypedia" id="43178">
    <property type="antibodies" value="127 antibodies from 22 providers"/>
</dbReference>
<dbReference type="Ensembl" id="ENSMUST00000060049.8">
    <molecule id="Q8QZX2-1"/>
    <property type="protein sequence ID" value="ENSMUSP00000049973.7"/>
    <property type="gene ID" value="ENSMUSG00000079555.3"/>
</dbReference>
<dbReference type="GeneID" id="231123"/>
<dbReference type="KEGG" id="mmu:231123"/>
<dbReference type="UCSC" id="uc008xbv.3">
    <molecule id="Q8QZX2-1"/>
    <property type="organism name" value="mouse"/>
</dbReference>
<dbReference type="AGR" id="MGI:2387633"/>
<dbReference type="CTD" id="79441"/>
<dbReference type="MGI" id="MGI:2387633">
    <property type="gene designation" value="Haus3"/>
</dbReference>
<dbReference type="VEuPathDB" id="HostDB:ENSMUSG00000079555"/>
<dbReference type="eggNOG" id="ENOG502R4I5">
    <property type="taxonomic scope" value="Eukaryota"/>
</dbReference>
<dbReference type="GeneTree" id="ENSGT00390000011904"/>
<dbReference type="HOGENOM" id="CLU_031795_0_0_1"/>
<dbReference type="InParanoid" id="Q8QZX2"/>
<dbReference type="OMA" id="LEWFCGN"/>
<dbReference type="OrthoDB" id="2159690at2759"/>
<dbReference type="PhylomeDB" id="Q8QZX2"/>
<dbReference type="TreeFam" id="TF331151"/>
<dbReference type="Reactome" id="R-MMU-2565942">
    <property type="pathway name" value="Regulation of PLK1 Activity at G2/M Transition"/>
</dbReference>
<dbReference type="Reactome" id="R-MMU-380259">
    <property type="pathway name" value="Loss of Nlp from mitotic centrosomes"/>
</dbReference>
<dbReference type="Reactome" id="R-MMU-380270">
    <property type="pathway name" value="Recruitment of mitotic centrosome proteins and complexes"/>
</dbReference>
<dbReference type="Reactome" id="R-MMU-380284">
    <property type="pathway name" value="Loss of proteins required for interphase microtubule organization from the centrosome"/>
</dbReference>
<dbReference type="Reactome" id="R-MMU-380320">
    <property type="pathway name" value="Recruitment of NuMA to mitotic centrosomes"/>
</dbReference>
<dbReference type="Reactome" id="R-MMU-5620912">
    <property type="pathway name" value="Anchoring of the basal body to the plasma membrane"/>
</dbReference>
<dbReference type="Reactome" id="R-MMU-8854518">
    <property type="pathway name" value="AURKA Activation by TPX2"/>
</dbReference>
<dbReference type="BioGRID-ORCS" id="231123">
    <property type="hits" value="23 hits in 78 CRISPR screens"/>
</dbReference>
<dbReference type="PRO" id="PR:Q8QZX2"/>
<dbReference type="Proteomes" id="UP000000589">
    <property type="component" value="Chromosome 5"/>
</dbReference>
<dbReference type="RNAct" id="Q8QZX2">
    <property type="molecule type" value="protein"/>
</dbReference>
<dbReference type="Bgee" id="ENSMUSG00000079555">
    <property type="expression patterns" value="Expressed in primary oocyte and 269 other cell types or tissues"/>
</dbReference>
<dbReference type="ExpressionAtlas" id="Q8QZX2">
    <property type="expression patterns" value="baseline and differential"/>
</dbReference>
<dbReference type="GO" id="GO:0005813">
    <property type="term" value="C:centrosome"/>
    <property type="evidence" value="ECO:0007669"/>
    <property type="project" value="UniProtKB-SubCell"/>
</dbReference>
<dbReference type="GO" id="GO:0036064">
    <property type="term" value="C:ciliary basal body"/>
    <property type="evidence" value="ECO:0007669"/>
    <property type="project" value="Ensembl"/>
</dbReference>
<dbReference type="GO" id="GO:0070652">
    <property type="term" value="C:HAUS complex"/>
    <property type="evidence" value="ECO:0000250"/>
    <property type="project" value="UniProtKB"/>
</dbReference>
<dbReference type="GO" id="GO:0045171">
    <property type="term" value="C:intercellular bridge"/>
    <property type="evidence" value="ECO:0007669"/>
    <property type="project" value="Ensembl"/>
</dbReference>
<dbReference type="GO" id="GO:0005739">
    <property type="term" value="C:mitochondrion"/>
    <property type="evidence" value="ECO:0007669"/>
    <property type="project" value="Ensembl"/>
</dbReference>
<dbReference type="GO" id="GO:1990498">
    <property type="term" value="C:mitotic spindle microtubule"/>
    <property type="evidence" value="ECO:0000250"/>
    <property type="project" value="UniProtKB"/>
</dbReference>
<dbReference type="GO" id="GO:0005654">
    <property type="term" value="C:nucleoplasm"/>
    <property type="evidence" value="ECO:0007669"/>
    <property type="project" value="Ensembl"/>
</dbReference>
<dbReference type="GO" id="GO:0051301">
    <property type="term" value="P:cell division"/>
    <property type="evidence" value="ECO:0007669"/>
    <property type="project" value="UniProtKB-KW"/>
</dbReference>
<dbReference type="GO" id="GO:0007098">
    <property type="term" value="P:centrosome cycle"/>
    <property type="evidence" value="ECO:0000250"/>
    <property type="project" value="UniProtKB"/>
</dbReference>
<dbReference type="GO" id="GO:0051225">
    <property type="term" value="P:spindle assembly"/>
    <property type="evidence" value="ECO:0000250"/>
    <property type="project" value="UniProtKB"/>
</dbReference>
<dbReference type="InterPro" id="IPR026206">
    <property type="entry name" value="HAUS3"/>
</dbReference>
<dbReference type="InterPro" id="IPR032733">
    <property type="entry name" value="HAUS3_N"/>
</dbReference>
<dbReference type="PANTHER" id="PTHR19378">
    <property type="entry name" value="GOLGIN- RELATED"/>
    <property type="match status" value="1"/>
</dbReference>
<dbReference type="PANTHER" id="PTHR19378:SF0">
    <property type="entry name" value="HAUS AUGMIN-LIKE COMPLEX SUBUNIT 3"/>
    <property type="match status" value="1"/>
</dbReference>
<dbReference type="Pfam" id="PF14932">
    <property type="entry name" value="HAUS-augmin3"/>
    <property type="match status" value="1"/>
</dbReference>
<dbReference type="PRINTS" id="PR02089">
    <property type="entry name" value="HAUSAUGMINL3"/>
</dbReference>
<gene>
    <name type="primary">Haus3</name>
</gene>
<evidence type="ECO:0000250" key="1"/>
<evidence type="ECO:0000250" key="2">
    <source>
        <dbReference type="UniProtKB" id="Q68CZ6"/>
    </source>
</evidence>
<evidence type="ECO:0000255" key="3"/>
<evidence type="ECO:0000303" key="4">
    <source>
    </source>
</evidence>
<evidence type="ECO:0000305" key="5"/>